<evidence type="ECO:0000255" key="1">
    <source>
        <dbReference type="HAMAP-Rule" id="MF_01218"/>
    </source>
</evidence>
<comment type="function">
    <text evidence="1">Catalyzes the conversion of uracil and 5-phospho-alpha-D-ribose 1-diphosphate (PRPP) to UMP and diphosphate.</text>
</comment>
<comment type="catalytic activity">
    <reaction evidence="1">
        <text>UMP + diphosphate = 5-phospho-alpha-D-ribose 1-diphosphate + uracil</text>
        <dbReference type="Rhea" id="RHEA:13017"/>
        <dbReference type="ChEBI" id="CHEBI:17568"/>
        <dbReference type="ChEBI" id="CHEBI:33019"/>
        <dbReference type="ChEBI" id="CHEBI:57865"/>
        <dbReference type="ChEBI" id="CHEBI:58017"/>
        <dbReference type="EC" id="2.4.2.9"/>
    </reaction>
</comment>
<comment type="cofactor">
    <cofactor evidence="1">
        <name>Mg(2+)</name>
        <dbReference type="ChEBI" id="CHEBI:18420"/>
    </cofactor>
    <text evidence="1">Binds 1 Mg(2+) ion per subunit. The magnesium is bound as Mg-PRPP.</text>
</comment>
<comment type="activity regulation">
    <text evidence="1">Allosterically activated by GTP.</text>
</comment>
<comment type="pathway">
    <text evidence="1">Pyrimidine metabolism; UMP biosynthesis via salvage pathway; UMP from uracil: step 1/1.</text>
</comment>
<comment type="similarity">
    <text evidence="1">Belongs to the UPRTase family.</text>
</comment>
<gene>
    <name evidence="1" type="primary">upp</name>
    <name type="ordered locus">XC_1728</name>
</gene>
<name>UPP_XANC8</name>
<sequence>MKIVEVRHPLVQHKIGLLRDAALSTKGFRELVTELGTLLAYEATANLDTESHVQPGWAGPVEVQRIAGAKITLVPILRAGLGMLPGVLALIPAARVSVVGLQRDEETLQPVPYFERLTGRLEERDALILDPMLATGGTLIATIDMLKRAGARRIKGIFLVAAPEGLKALEAVHPDVEVYTAAIDDHLNEKGYILPGLGDAGDRIFGTRVE</sequence>
<dbReference type="EC" id="2.4.2.9" evidence="1"/>
<dbReference type="EMBL" id="CP000050">
    <property type="protein sequence ID" value="AAY48793.1"/>
    <property type="molecule type" value="Genomic_DNA"/>
</dbReference>
<dbReference type="RefSeq" id="WP_011037528.1">
    <property type="nucleotide sequence ID" value="NZ_CP155948.1"/>
</dbReference>
<dbReference type="SMR" id="Q4UVY0"/>
<dbReference type="KEGG" id="xcb:XC_1728"/>
<dbReference type="HOGENOM" id="CLU_067096_2_2_6"/>
<dbReference type="UniPathway" id="UPA00574">
    <property type="reaction ID" value="UER00636"/>
</dbReference>
<dbReference type="Proteomes" id="UP000000420">
    <property type="component" value="Chromosome"/>
</dbReference>
<dbReference type="GO" id="GO:0005525">
    <property type="term" value="F:GTP binding"/>
    <property type="evidence" value="ECO:0007669"/>
    <property type="project" value="UniProtKB-KW"/>
</dbReference>
<dbReference type="GO" id="GO:0000287">
    <property type="term" value="F:magnesium ion binding"/>
    <property type="evidence" value="ECO:0007669"/>
    <property type="project" value="UniProtKB-UniRule"/>
</dbReference>
<dbReference type="GO" id="GO:0004845">
    <property type="term" value="F:uracil phosphoribosyltransferase activity"/>
    <property type="evidence" value="ECO:0007669"/>
    <property type="project" value="UniProtKB-UniRule"/>
</dbReference>
<dbReference type="GO" id="GO:0044206">
    <property type="term" value="P:UMP salvage"/>
    <property type="evidence" value="ECO:0007669"/>
    <property type="project" value="UniProtKB-UniRule"/>
</dbReference>
<dbReference type="GO" id="GO:0006223">
    <property type="term" value="P:uracil salvage"/>
    <property type="evidence" value="ECO:0007669"/>
    <property type="project" value="InterPro"/>
</dbReference>
<dbReference type="CDD" id="cd06223">
    <property type="entry name" value="PRTases_typeI"/>
    <property type="match status" value="1"/>
</dbReference>
<dbReference type="FunFam" id="3.40.50.2020:FF:000003">
    <property type="entry name" value="Uracil phosphoribosyltransferase"/>
    <property type="match status" value="1"/>
</dbReference>
<dbReference type="Gene3D" id="3.40.50.2020">
    <property type="match status" value="1"/>
</dbReference>
<dbReference type="HAMAP" id="MF_01218_B">
    <property type="entry name" value="Upp_B"/>
    <property type="match status" value="1"/>
</dbReference>
<dbReference type="InterPro" id="IPR000836">
    <property type="entry name" value="PRibTrfase_dom"/>
</dbReference>
<dbReference type="InterPro" id="IPR029057">
    <property type="entry name" value="PRTase-like"/>
</dbReference>
<dbReference type="InterPro" id="IPR034332">
    <property type="entry name" value="Upp_B"/>
</dbReference>
<dbReference type="InterPro" id="IPR050054">
    <property type="entry name" value="UPRTase/APRTase"/>
</dbReference>
<dbReference type="InterPro" id="IPR005765">
    <property type="entry name" value="Ura_phspho_trans"/>
</dbReference>
<dbReference type="NCBIfam" id="NF001097">
    <property type="entry name" value="PRK00129.1"/>
    <property type="match status" value="1"/>
</dbReference>
<dbReference type="NCBIfam" id="TIGR01091">
    <property type="entry name" value="upp"/>
    <property type="match status" value="1"/>
</dbReference>
<dbReference type="PANTHER" id="PTHR32315">
    <property type="entry name" value="ADENINE PHOSPHORIBOSYLTRANSFERASE"/>
    <property type="match status" value="1"/>
</dbReference>
<dbReference type="PANTHER" id="PTHR32315:SF4">
    <property type="entry name" value="URACIL PHOSPHORIBOSYLTRANSFERASE, CHLOROPLASTIC"/>
    <property type="match status" value="1"/>
</dbReference>
<dbReference type="Pfam" id="PF14681">
    <property type="entry name" value="UPRTase"/>
    <property type="match status" value="1"/>
</dbReference>
<dbReference type="SUPFAM" id="SSF53271">
    <property type="entry name" value="PRTase-like"/>
    <property type="match status" value="1"/>
</dbReference>
<keyword id="KW-0021">Allosteric enzyme</keyword>
<keyword id="KW-0328">Glycosyltransferase</keyword>
<keyword id="KW-0342">GTP-binding</keyword>
<keyword id="KW-0460">Magnesium</keyword>
<keyword id="KW-0547">Nucleotide-binding</keyword>
<keyword id="KW-0808">Transferase</keyword>
<protein>
    <recommendedName>
        <fullName evidence="1">Uracil phosphoribosyltransferase</fullName>
        <ecNumber evidence="1">2.4.2.9</ecNumber>
    </recommendedName>
    <alternativeName>
        <fullName evidence="1">UMP pyrophosphorylase</fullName>
    </alternativeName>
    <alternativeName>
        <fullName evidence="1">UPRTase</fullName>
    </alternativeName>
</protein>
<accession>Q4UVY0</accession>
<proteinExistence type="inferred from homology"/>
<reference key="1">
    <citation type="journal article" date="2005" name="Genome Res.">
        <title>Comparative and functional genomic analyses of the pathogenicity of phytopathogen Xanthomonas campestris pv. campestris.</title>
        <authorList>
            <person name="Qian W."/>
            <person name="Jia Y."/>
            <person name="Ren S.-X."/>
            <person name="He Y.-Q."/>
            <person name="Feng J.-X."/>
            <person name="Lu L.-F."/>
            <person name="Sun Q."/>
            <person name="Ying G."/>
            <person name="Tang D.-J."/>
            <person name="Tang H."/>
            <person name="Wu W."/>
            <person name="Hao P."/>
            <person name="Wang L."/>
            <person name="Jiang B.-L."/>
            <person name="Zeng S."/>
            <person name="Gu W.-Y."/>
            <person name="Lu G."/>
            <person name="Rong L."/>
            <person name="Tian Y."/>
            <person name="Yao Z."/>
            <person name="Fu G."/>
            <person name="Chen B."/>
            <person name="Fang R."/>
            <person name="Qiang B."/>
            <person name="Chen Z."/>
            <person name="Zhao G.-P."/>
            <person name="Tang J.-L."/>
            <person name="He C."/>
        </authorList>
    </citation>
    <scope>NUCLEOTIDE SEQUENCE [LARGE SCALE GENOMIC DNA]</scope>
    <source>
        <strain>8004</strain>
    </source>
</reference>
<feature type="chain" id="PRO_1000053811" description="Uracil phosphoribosyltransferase">
    <location>
        <begin position="1"/>
        <end position="210"/>
    </location>
</feature>
<feature type="binding site" evidence="1">
    <location>
        <position position="78"/>
    </location>
    <ligand>
        <name>5-phospho-alpha-D-ribose 1-diphosphate</name>
        <dbReference type="ChEBI" id="CHEBI:58017"/>
    </ligand>
</feature>
<feature type="binding site" evidence="1">
    <location>
        <position position="103"/>
    </location>
    <ligand>
        <name>5-phospho-alpha-D-ribose 1-diphosphate</name>
        <dbReference type="ChEBI" id="CHEBI:58017"/>
    </ligand>
</feature>
<feature type="binding site" evidence="1">
    <location>
        <begin position="130"/>
        <end position="138"/>
    </location>
    <ligand>
        <name>5-phospho-alpha-D-ribose 1-diphosphate</name>
        <dbReference type="ChEBI" id="CHEBI:58017"/>
    </ligand>
</feature>
<feature type="binding site" evidence="1">
    <location>
        <position position="193"/>
    </location>
    <ligand>
        <name>uracil</name>
        <dbReference type="ChEBI" id="CHEBI:17568"/>
    </ligand>
</feature>
<feature type="binding site" evidence="1">
    <location>
        <begin position="198"/>
        <end position="200"/>
    </location>
    <ligand>
        <name>uracil</name>
        <dbReference type="ChEBI" id="CHEBI:17568"/>
    </ligand>
</feature>
<feature type="binding site" evidence="1">
    <location>
        <position position="199"/>
    </location>
    <ligand>
        <name>5-phospho-alpha-D-ribose 1-diphosphate</name>
        <dbReference type="ChEBI" id="CHEBI:58017"/>
    </ligand>
</feature>
<organism>
    <name type="scientific">Xanthomonas campestris pv. campestris (strain 8004)</name>
    <dbReference type="NCBI Taxonomy" id="314565"/>
    <lineage>
        <taxon>Bacteria</taxon>
        <taxon>Pseudomonadati</taxon>
        <taxon>Pseudomonadota</taxon>
        <taxon>Gammaproteobacteria</taxon>
        <taxon>Lysobacterales</taxon>
        <taxon>Lysobacteraceae</taxon>
        <taxon>Xanthomonas</taxon>
    </lineage>
</organism>